<evidence type="ECO:0000250" key="1"/>
<evidence type="ECO:0000255" key="2">
    <source>
        <dbReference type="PROSITE-ProRule" id="PRU01210"/>
    </source>
</evidence>
<evidence type="ECO:0000305" key="3"/>
<feature type="signal peptide" evidence="1">
    <location>
        <begin position="1"/>
        <end position="19"/>
    </location>
</feature>
<feature type="chain" id="PRO_0000035285" description="Toxin CngtIV">
    <location>
        <begin position="20"/>
        <end position="84"/>
    </location>
</feature>
<feature type="domain" description="LCN-type CS-alpha/beta" evidence="2">
    <location>
        <begin position="20"/>
        <end position="84"/>
    </location>
</feature>
<feature type="disulfide bond" evidence="2">
    <location>
        <begin position="30"/>
        <end position="83"/>
    </location>
</feature>
<feature type="disulfide bond" evidence="2">
    <location>
        <begin position="34"/>
        <end position="59"/>
    </location>
</feature>
<feature type="disulfide bond" evidence="2">
    <location>
        <begin position="43"/>
        <end position="64"/>
    </location>
</feature>
<feature type="disulfide bond" evidence="2">
    <location>
        <begin position="47"/>
        <end position="66"/>
    </location>
</feature>
<sequence length="86" mass="9560">MNSLLIITACLVLIGTVWAKDGYLVDVKGCKKNCYKLGENDYCNRECKMKHRGGSYGYCYGFGCYCEGLSDSTPTWPLPNKRCGGK</sequence>
<protein>
    <recommendedName>
        <fullName>Toxin CngtIV</fullName>
    </recommendedName>
</protein>
<comment type="function">
    <text evidence="1">Beta toxins bind voltage-independently at site-4 of sodium channels (Nav) and shift the voltage of activation toward more negative potentials thereby affecting sodium channel activation and promoting spontaneous and repetitive firing.</text>
</comment>
<comment type="subcellular location">
    <subcellularLocation>
        <location>Secreted</location>
    </subcellularLocation>
</comment>
<comment type="tissue specificity">
    <text>Expressed by the venom gland.</text>
</comment>
<comment type="domain">
    <text evidence="3">Has the structural arrangement of an alpha-helix connected to antiparallel beta-sheets by disulfide bonds (CS-alpha/beta).</text>
</comment>
<comment type="similarity">
    <text evidence="3">Belongs to the long (4 C-C) scorpion toxin superfamily. Sodium channel inhibitor family. Beta subfamily.</text>
</comment>
<name>SCXY_CENNO</name>
<organism>
    <name type="scientific">Centruroides noxius</name>
    <name type="common">Mexican scorpion</name>
    <dbReference type="NCBI Taxonomy" id="6878"/>
    <lineage>
        <taxon>Eukaryota</taxon>
        <taxon>Metazoa</taxon>
        <taxon>Ecdysozoa</taxon>
        <taxon>Arthropoda</taxon>
        <taxon>Chelicerata</taxon>
        <taxon>Arachnida</taxon>
        <taxon>Scorpiones</taxon>
        <taxon>Buthida</taxon>
        <taxon>Buthoidea</taxon>
        <taxon>Buthidae</taxon>
        <taxon>Centruroides</taxon>
    </lineage>
</organism>
<accession>P45665</accession>
<keyword id="KW-1015">Disulfide bond</keyword>
<keyword id="KW-0872">Ion channel impairing toxin</keyword>
<keyword id="KW-0528">Neurotoxin</keyword>
<keyword id="KW-0964">Secreted</keyword>
<keyword id="KW-0732">Signal</keyword>
<keyword id="KW-0800">Toxin</keyword>
<keyword id="KW-0738">Voltage-gated sodium channel impairing toxin</keyword>
<reference key="1">
    <citation type="journal article" date="1993" name="Gene">
        <title>Cloning and characterization of cDNAs that code for Na(+)-channel-blocking toxins of the scorpion Centruroides noxius Hoffmann.</title>
        <authorList>
            <person name="Becerril B."/>
            <person name="Vazquez A."/>
            <person name="Garcia C."/>
            <person name="Corona M."/>
            <person name="Bolivar F."/>
            <person name="Possani L.D."/>
        </authorList>
    </citation>
    <scope>NUCLEOTIDE SEQUENCE [MRNA]</scope>
    <source>
        <tissue>Venom gland</tissue>
    </source>
</reference>
<proteinExistence type="evidence at transcript level"/>
<dbReference type="EMBL" id="L05062">
    <property type="protein sequence ID" value="AAA28287.1"/>
    <property type="molecule type" value="mRNA"/>
</dbReference>
<dbReference type="PIR" id="JN0671">
    <property type="entry name" value="JN0671"/>
</dbReference>
<dbReference type="SMR" id="P45665"/>
<dbReference type="GO" id="GO:0005576">
    <property type="term" value="C:extracellular region"/>
    <property type="evidence" value="ECO:0007669"/>
    <property type="project" value="UniProtKB-SubCell"/>
</dbReference>
<dbReference type="GO" id="GO:0019871">
    <property type="term" value="F:sodium channel inhibitor activity"/>
    <property type="evidence" value="ECO:0007669"/>
    <property type="project" value="InterPro"/>
</dbReference>
<dbReference type="GO" id="GO:0090729">
    <property type="term" value="F:toxin activity"/>
    <property type="evidence" value="ECO:0007669"/>
    <property type="project" value="UniProtKB-KW"/>
</dbReference>
<dbReference type="GO" id="GO:0006952">
    <property type="term" value="P:defense response"/>
    <property type="evidence" value="ECO:0007669"/>
    <property type="project" value="InterPro"/>
</dbReference>
<dbReference type="CDD" id="cd23106">
    <property type="entry name" value="neurotoxins_LC_scorpion"/>
    <property type="match status" value="1"/>
</dbReference>
<dbReference type="FunFam" id="3.30.30.10:FF:000002">
    <property type="entry name" value="Alpha-like toxin BmK-M1"/>
    <property type="match status" value="1"/>
</dbReference>
<dbReference type="Gene3D" id="3.30.30.10">
    <property type="entry name" value="Knottin, scorpion toxin-like"/>
    <property type="match status" value="1"/>
</dbReference>
<dbReference type="InterPro" id="IPR044062">
    <property type="entry name" value="LCN-type_CS_alpha_beta_dom"/>
</dbReference>
<dbReference type="InterPro" id="IPR003614">
    <property type="entry name" value="Scorpion_toxin-like"/>
</dbReference>
<dbReference type="InterPro" id="IPR036574">
    <property type="entry name" value="Scorpion_toxin-like_sf"/>
</dbReference>
<dbReference type="InterPro" id="IPR018218">
    <property type="entry name" value="Scorpion_toxinL"/>
</dbReference>
<dbReference type="InterPro" id="IPR002061">
    <property type="entry name" value="Scorpion_toxinL/defensin"/>
</dbReference>
<dbReference type="Pfam" id="PF00537">
    <property type="entry name" value="Toxin_3"/>
    <property type="match status" value="1"/>
</dbReference>
<dbReference type="PRINTS" id="PR00285">
    <property type="entry name" value="SCORPNTOXIN"/>
</dbReference>
<dbReference type="PRINTS" id="PR00284">
    <property type="entry name" value="TOXIN"/>
</dbReference>
<dbReference type="SMART" id="SM00505">
    <property type="entry name" value="Knot1"/>
    <property type="match status" value="1"/>
</dbReference>
<dbReference type="SUPFAM" id="SSF57095">
    <property type="entry name" value="Scorpion toxin-like"/>
    <property type="match status" value="1"/>
</dbReference>
<dbReference type="PROSITE" id="PS51863">
    <property type="entry name" value="LCN_CSAB"/>
    <property type="match status" value="1"/>
</dbReference>